<feature type="signal peptide" evidence="1">
    <location>
        <begin position="1"/>
        <end position="30"/>
    </location>
</feature>
<feature type="chain" id="PRO_5003309939" description="LEAF RUST 10 DISEASE-RESISTANCE LOCUS RECEPTOR-LIKE PROTEIN KINASE-like 2.3">
    <location>
        <begin position="31"/>
        <end position="620"/>
    </location>
</feature>
<feature type="topological domain" description="Extracellular" evidence="6">
    <location>
        <begin position="31"/>
        <end position="256"/>
    </location>
</feature>
<feature type="transmembrane region" description="Helical" evidence="1">
    <location>
        <begin position="257"/>
        <end position="277"/>
    </location>
</feature>
<feature type="topological domain" description="Cytoplasmic" evidence="6">
    <location>
        <begin position="278"/>
        <end position="620"/>
    </location>
</feature>
<feature type="domain" description="Protein kinase" evidence="2">
    <location>
        <begin position="314"/>
        <end position="596"/>
    </location>
</feature>
<feature type="region of interest" description="Disordered" evidence="4">
    <location>
        <begin position="586"/>
        <end position="620"/>
    </location>
</feature>
<feature type="compositionally biased region" description="Polar residues" evidence="4">
    <location>
        <begin position="600"/>
        <end position="620"/>
    </location>
</feature>
<feature type="active site" description="Proton acceptor" evidence="2">
    <location>
        <position position="431"/>
    </location>
</feature>
<feature type="binding site" evidence="2">
    <location>
        <begin position="320"/>
        <end position="328"/>
    </location>
    <ligand>
        <name>ATP</name>
        <dbReference type="ChEBI" id="CHEBI:30616"/>
    </ligand>
</feature>
<feature type="binding site" evidence="2">
    <location>
        <position position="342"/>
    </location>
    <ligand>
        <name>ATP</name>
        <dbReference type="ChEBI" id="CHEBI:30616"/>
    </ligand>
</feature>
<feature type="glycosylation site" description="N-linked (GlcNAc...) asparagine" evidence="3">
    <location>
        <position position="75"/>
    </location>
</feature>
<feature type="glycosylation site" description="N-linked (GlcNAc...) asparagine" evidence="3">
    <location>
        <position position="85"/>
    </location>
</feature>
<feature type="glycosylation site" description="N-linked (GlcNAc...) asparagine" evidence="3">
    <location>
        <position position="93"/>
    </location>
</feature>
<feature type="glycosylation site" description="N-linked (GlcNAc...) asparagine" evidence="3">
    <location>
        <position position="132"/>
    </location>
</feature>
<feature type="glycosylation site" description="N-linked (GlcNAc...) asparagine" evidence="3">
    <location>
        <position position="148"/>
    </location>
</feature>
<feature type="glycosylation site" description="N-linked (GlcNAc...) asparagine" evidence="3">
    <location>
        <position position="162"/>
    </location>
</feature>
<feature type="glycosylation site" description="N-linked (GlcNAc...) asparagine" evidence="3">
    <location>
        <position position="189"/>
    </location>
</feature>
<feature type="glycosylation site" description="N-linked (GlcNAc...) asparagine" evidence="3">
    <location>
        <position position="231"/>
    </location>
</feature>
<feature type="glycosylation site" description="N-linked (GlcNAc...) asparagine" evidence="3">
    <location>
        <position position="248"/>
    </location>
</feature>
<gene>
    <name evidence="5" type="primary">LRK10L-2.3</name>
    <name evidence="7" type="ordered locus">At5g38250</name>
    <name evidence="8" type="ORF">MXA21.6</name>
</gene>
<sequence>MDSLSSMGFQTASFFLILLFLFYHLPCVPSQQERSRLCKPFQCGDITVGFPFWGENRQSDCGHFSLKLNCNKPSNTTSLTISGHNYSVLHIDNKSNILSLSRQDFSGPFCSASFSSTPLRSDLFQNLQPYRNLTVFYMCDPRRHFFGNFTCPVKGLGSVVQNSTYRKLCDKSFSVTVPTSYVPEEEALNLTHLESVLRKGLEVKLKISEMSGQECVTTDGNSGFTRFCCTNVSGPEISCLTSITTMNNGTYSDNRPFLVTIGTVLGSILCVCVVLFLAFYLNERRIAKAARIQHLEALGTLRGYNYKQIKKITKSFTEVVGRGGFGTVYRGRLRDGRKVAVKVLKDSKGNCEDFINEVASMSQTSHVNIVTLLGFCYEGSKRAIIYEFLENGSLDQSLNLDVSTLYGIALGVARGLEYLHYGCKTRIVHFDIKPQNVLLDENLRPKVADFGLAKLCEKQESILSLLDTRGTIGYIAPELFSRMYGSVSHKSDVYSYGMLVLEMIGARNKERVQNADPNNSSAYFPDWIYKDLENFDNTRLLGDGLTREEEKNAKKMILVGLWCIQFRPSDRPSMNKVVEMMEGSLDSLDPPPKPLLHMPMQNNNAESSQLSVESSIYSEV</sequence>
<name>LRL23_ARATH</name>
<evidence type="ECO:0000255" key="1"/>
<evidence type="ECO:0000255" key="2">
    <source>
        <dbReference type="PROSITE-ProRule" id="PRU00159"/>
    </source>
</evidence>
<evidence type="ECO:0000255" key="3">
    <source>
        <dbReference type="PROSITE-ProRule" id="PRU00498"/>
    </source>
</evidence>
<evidence type="ECO:0000256" key="4">
    <source>
        <dbReference type="SAM" id="MobiDB-lite"/>
    </source>
</evidence>
<evidence type="ECO:0000303" key="5">
    <source>
    </source>
</evidence>
<evidence type="ECO:0000305" key="6"/>
<evidence type="ECO:0000312" key="7">
    <source>
        <dbReference type="Araport" id="AT5G38250"/>
    </source>
</evidence>
<evidence type="ECO:0000312" key="8">
    <source>
        <dbReference type="EMBL" id="BAB11291.1"/>
    </source>
</evidence>
<reference key="1">
    <citation type="journal article" date="1997" name="DNA Res.">
        <title>Structural analysis of Arabidopsis thaliana chromosome 5. I. Sequence features of the 1.6 Mb regions covered by twenty physically assigned P1 clones.</title>
        <authorList>
            <person name="Sato S."/>
            <person name="Kotani H."/>
            <person name="Nakamura Y."/>
            <person name="Kaneko T."/>
            <person name="Asamizu E."/>
            <person name="Fukami M."/>
            <person name="Miyajima N."/>
            <person name="Tabata S."/>
        </authorList>
    </citation>
    <scope>NUCLEOTIDE SEQUENCE [LARGE SCALE GENOMIC DNA]</scope>
    <source>
        <strain>cv. Columbia</strain>
    </source>
</reference>
<reference key="2">
    <citation type="journal article" date="2017" name="Plant J.">
        <title>Araport11: a complete reannotation of the Arabidopsis thaliana reference genome.</title>
        <authorList>
            <person name="Cheng C.Y."/>
            <person name="Krishnakumar V."/>
            <person name="Chan A.P."/>
            <person name="Thibaud-Nissen F."/>
            <person name="Schobel S."/>
            <person name="Town C.D."/>
        </authorList>
    </citation>
    <scope>GENOME REANNOTATION</scope>
    <source>
        <strain>cv. Columbia</strain>
    </source>
</reference>
<reference key="3">
    <citation type="journal article" date="2001" name="Proc. Natl. Acad. Sci. U.S.A.">
        <title>Receptor-like kinases from Arabidopsis form a monophyletic gene family related to animal receptor kinases.</title>
        <authorList>
            <person name="Shiu S.H."/>
            <person name="Bleecker A.B."/>
        </authorList>
    </citation>
    <scope>GENE FAMILY</scope>
</reference>
<reference key="4">
    <citation type="journal article" date="2003" name="Plant Physiol.">
        <title>Expansion of the receptor-like kinase/Pelle gene family and receptor-like proteins in Arabidopsis.</title>
        <authorList>
            <person name="Shiu S.H."/>
            <person name="Bleecker A.B."/>
        </authorList>
    </citation>
    <scope>GENE FAMILY</scope>
</reference>
<protein>
    <recommendedName>
        <fullName evidence="5">LEAF RUST 10 DISEASE-RESISTANCE LOCUS RECEPTOR-LIKE PROTEIN KINASE-like 2.3</fullName>
        <ecNumber>2.7.11.1</ecNumber>
    </recommendedName>
    <alternativeName>
        <fullName evidence="6">Probable receptor-like serine/threonine-protein kinase LRK10L-2.3</fullName>
    </alternativeName>
</protein>
<comment type="catalytic activity">
    <reaction>
        <text>L-seryl-[protein] + ATP = O-phospho-L-seryl-[protein] + ADP + H(+)</text>
        <dbReference type="Rhea" id="RHEA:17989"/>
        <dbReference type="Rhea" id="RHEA-COMP:9863"/>
        <dbReference type="Rhea" id="RHEA-COMP:11604"/>
        <dbReference type="ChEBI" id="CHEBI:15378"/>
        <dbReference type="ChEBI" id="CHEBI:29999"/>
        <dbReference type="ChEBI" id="CHEBI:30616"/>
        <dbReference type="ChEBI" id="CHEBI:83421"/>
        <dbReference type="ChEBI" id="CHEBI:456216"/>
        <dbReference type="EC" id="2.7.11.1"/>
    </reaction>
</comment>
<comment type="catalytic activity">
    <reaction>
        <text>L-threonyl-[protein] + ATP = O-phospho-L-threonyl-[protein] + ADP + H(+)</text>
        <dbReference type="Rhea" id="RHEA:46608"/>
        <dbReference type="Rhea" id="RHEA-COMP:11060"/>
        <dbReference type="Rhea" id="RHEA-COMP:11605"/>
        <dbReference type="ChEBI" id="CHEBI:15378"/>
        <dbReference type="ChEBI" id="CHEBI:30013"/>
        <dbReference type="ChEBI" id="CHEBI:30616"/>
        <dbReference type="ChEBI" id="CHEBI:61977"/>
        <dbReference type="ChEBI" id="CHEBI:456216"/>
        <dbReference type="EC" id="2.7.11.1"/>
    </reaction>
</comment>
<comment type="subcellular location">
    <subcellularLocation>
        <location evidence="1">Membrane</location>
        <topology evidence="6">Single-pass type I membrane protein</topology>
    </subcellularLocation>
</comment>
<comment type="similarity">
    <text evidence="2">Belongs to the protein kinase superfamily. Ser/Thr protein kinase family.</text>
</comment>
<comment type="sequence caution" evidence="6">
    <conflict type="erroneous gene model prediction">
        <sequence resource="EMBL-CDS" id="BAB11291"/>
    </conflict>
</comment>
<dbReference type="EC" id="2.7.11.1"/>
<dbReference type="EMBL" id="AB005247">
    <property type="protein sequence ID" value="BAB11291.1"/>
    <property type="status" value="ALT_SEQ"/>
    <property type="molecule type" value="Genomic_DNA"/>
</dbReference>
<dbReference type="EMBL" id="CP002688">
    <property type="protein sequence ID" value="AED94286.2"/>
    <property type="molecule type" value="Genomic_DNA"/>
</dbReference>
<dbReference type="RefSeq" id="NP_001318693.1">
    <property type="nucleotide sequence ID" value="NM_001344238.1"/>
</dbReference>
<dbReference type="SMR" id="F4KA51"/>
<dbReference type="FunCoup" id="F4KA51">
    <property type="interactions" value="48"/>
</dbReference>
<dbReference type="STRING" id="3702.F4KA51"/>
<dbReference type="GlyCosmos" id="F4KA51">
    <property type="glycosylation" value="9 sites, No reported glycans"/>
</dbReference>
<dbReference type="GlyGen" id="F4KA51">
    <property type="glycosylation" value="9 sites"/>
</dbReference>
<dbReference type="PaxDb" id="3702-AT5G38250.1"/>
<dbReference type="ProteomicsDB" id="238485"/>
<dbReference type="EnsemblPlants" id="AT5G38250.1">
    <property type="protein sequence ID" value="AT5G38250.1"/>
    <property type="gene ID" value="AT5G38250"/>
</dbReference>
<dbReference type="GeneID" id="833807"/>
<dbReference type="Gramene" id="AT5G38250.1">
    <property type="protein sequence ID" value="AT5G38250.1"/>
    <property type="gene ID" value="AT5G38250"/>
</dbReference>
<dbReference type="KEGG" id="ath:AT5G38250"/>
<dbReference type="Araport" id="AT5G38250"/>
<dbReference type="TAIR" id="AT5G38250"/>
<dbReference type="eggNOG" id="KOG1187">
    <property type="taxonomic scope" value="Eukaryota"/>
</dbReference>
<dbReference type="HOGENOM" id="CLU_000288_115_3_1"/>
<dbReference type="InParanoid" id="F4KA51"/>
<dbReference type="OMA" id="VEVEWYW"/>
<dbReference type="PRO" id="PR:F4KA51"/>
<dbReference type="Proteomes" id="UP000006548">
    <property type="component" value="Chromosome 5"/>
</dbReference>
<dbReference type="ExpressionAtlas" id="F4KA51">
    <property type="expression patterns" value="baseline and differential"/>
</dbReference>
<dbReference type="GO" id="GO:0016020">
    <property type="term" value="C:membrane"/>
    <property type="evidence" value="ECO:0007669"/>
    <property type="project" value="UniProtKB-SubCell"/>
</dbReference>
<dbReference type="GO" id="GO:0005524">
    <property type="term" value="F:ATP binding"/>
    <property type="evidence" value="ECO:0007669"/>
    <property type="project" value="UniProtKB-KW"/>
</dbReference>
<dbReference type="GO" id="GO:0030247">
    <property type="term" value="F:polysaccharide binding"/>
    <property type="evidence" value="ECO:0007669"/>
    <property type="project" value="InterPro"/>
</dbReference>
<dbReference type="GO" id="GO:0106310">
    <property type="term" value="F:protein serine kinase activity"/>
    <property type="evidence" value="ECO:0007669"/>
    <property type="project" value="RHEA"/>
</dbReference>
<dbReference type="GO" id="GO:0004674">
    <property type="term" value="F:protein serine/threonine kinase activity"/>
    <property type="evidence" value="ECO:0007669"/>
    <property type="project" value="UniProtKB-KW"/>
</dbReference>
<dbReference type="FunFam" id="1.10.510.10:FF:000590">
    <property type="entry name" value="PR5-like receptor kinase"/>
    <property type="match status" value="1"/>
</dbReference>
<dbReference type="FunFam" id="3.30.200.20:FF:000644">
    <property type="entry name" value="Suppressor of npr1-1 constitutive 4"/>
    <property type="match status" value="1"/>
</dbReference>
<dbReference type="Gene3D" id="3.30.200.20">
    <property type="entry name" value="Phosphorylase Kinase, domain 1"/>
    <property type="match status" value="1"/>
</dbReference>
<dbReference type="Gene3D" id="1.10.510.10">
    <property type="entry name" value="Transferase(Phosphotransferase) domain 1"/>
    <property type="match status" value="1"/>
</dbReference>
<dbReference type="InterPro" id="IPR011009">
    <property type="entry name" value="Kinase-like_dom_sf"/>
</dbReference>
<dbReference type="InterPro" id="IPR045874">
    <property type="entry name" value="LRK10/LRL21-25-like"/>
</dbReference>
<dbReference type="InterPro" id="IPR000719">
    <property type="entry name" value="Prot_kinase_dom"/>
</dbReference>
<dbReference type="InterPro" id="IPR017441">
    <property type="entry name" value="Protein_kinase_ATP_BS"/>
</dbReference>
<dbReference type="InterPro" id="IPR001245">
    <property type="entry name" value="Ser-Thr/Tyr_kinase_cat_dom"/>
</dbReference>
<dbReference type="InterPro" id="IPR008271">
    <property type="entry name" value="Ser/Thr_kinase_AS"/>
</dbReference>
<dbReference type="InterPro" id="IPR025287">
    <property type="entry name" value="WAK_GUB"/>
</dbReference>
<dbReference type="PANTHER" id="PTHR27009">
    <property type="entry name" value="RUST RESISTANCE KINASE LR10-RELATED"/>
    <property type="match status" value="1"/>
</dbReference>
<dbReference type="Pfam" id="PF13947">
    <property type="entry name" value="GUB_WAK_bind"/>
    <property type="match status" value="1"/>
</dbReference>
<dbReference type="Pfam" id="PF07714">
    <property type="entry name" value="PK_Tyr_Ser-Thr"/>
    <property type="match status" value="1"/>
</dbReference>
<dbReference type="SMART" id="SM00220">
    <property type="entry name" value="S_TKc"/>
    <property type="match status" value="1"/>
</dbReference>
<dbReference type="SUPFAM" id="SSF56112">
    <property type="entry name" value="Protein kinase-like (PK-like)"/>
    <property type="match status" value="1"/>
</dbReference>
<dbReference type="PROSITE" id="PS00107">
    <property type="entry name" value="PROTEIN_KINASE_ATP"/>
    <property type="match status" value="1"/>
</dbReference>
<dbReference type="PROSITE" id="PS50011">
    <property type="entry name" value="PROTEIN_KINASE_DOM"/>
    <property type="match status" value="1"/>
</dbReference>
<dbReference type="PROSITE" id="PS00108">
    <property type="entry name" value="PROTEIN_KINASE_ST"/>
    <property type="match status" value="1"/>
</dbReference>
<keyword id="KW-0067">ATP-binding</keyword>
<keyword id="KW-0325">Glycoprotein</keyword>
<keyword id="KW-0418">Kinase</keyword>
<keyword id="KW-0472">Membrane</keyword>
<keyword id="KW-0547">Nucleotide-binding</keyword>
<keyword id="KW-0675">Receptor</keyword>
<keyword id="KW-1185">Reference proteome</keyword>
<keyword id="KW-0723">Serine/threonine-protein kinase</keyword>
<keyword id="KW-0732">Signal</keyword>
<keyword id="KW-0808">Transferase</keyword>
<keyword id="KW-0812">Transmembrane</keyword>
<keyword id="KW-1133">Transmembrane helix</keyword>
<accession>F4KA51</accession>
<accession>Q9FF32</accession>
<proteinExistence type="inferred from homology"/>
<organism>
    <name type="scientific">Arabidopsis thaliana</name>
    <name type="common">Mouse-ear cress</name>
    <dbReference type="NCBI Taxonomy" id="3702"/>
    <lineage>
        <taxon>Eukaryota</taxon>
        <taxon>Viridiplantae</taxon>
        <taxon>Streptophyta</taxon>
        <taxon>Embryophyta</taxon>
        <taxon>Tracheophyta</taxon>
        <taxon>Spermatophyta</taxon>
        <taxon>Magnoliopsida</taxon>
        <taxon>eudicotyledons</taxon>
        <taxon>Gunneridae</taxon>
        <taxon>Pentapetalae</taxon>
        <taxon>rosids</taxon>
        <taxon>malvids</taxon>
        <taxon>Brassicales</taxon>
        <taxon>Brassicaceae</taxon>
        <taxon>Camelineae</taxon>
        <taxon>Arabidopsis</taxon>
    </lineage>
</organism>